<sequence>MKPDAHQVKQFLLNLQDTICQQLTAVDGAEFVEDSWQREAGGGGRSRVLRNGGVFEQAGVNFSHVHGEAMPASATAHRPELAGRSFEAMGVSLVVHPHNPYVPTSHANVRFFIAEKPGAEPVWWFGGGFDLTPFYGFEEDAIHWHRTARDLCLPFGEDVYPRYKKWCDDYFYLKHRNEQRGIGGLFFDDLNTPDFDHCFAFMQAVGKGYTDAYLPIVERRKAMAYGERERNFQLYRRGRYVEFNLVWDRGTLFGLQTGGRTESILMSMPPLVRWEYDYQPKDGSPEAALSEFIKVRDWV</sequence>
<evidence type="ECO:0000255" key="1">
    <source>
        <dbReference type="HAMAP-Rule" id="MF_00333"/>
    </source>
</evidence>
<protein>
    <recommendedName>
        <fullName evidence="1">Oxygen-dependent coproporphyrinogen-III oxidase</fullName>
        <shortName evidence="1">CPO</shortName>
        <shortName evidence="1">Coprogen oxidase</shortName>
        <shortName evidence="1">Coproporphyrinogenase</shortName>
        <ecNumber evidence="1">1.3.3.3</ecNumber>
    </recommendedName>
</protein>
<dbReference type="EC" id="1.3.3.3" evidence="1"/>
<dbReference type="EMBL" id="CU928160">
    <property type="protein sequence ID" value="CAQ99333.1"/>
    <property type="molecule type" value="Genomic_DNA"/>
</dbReference>
<dbReference type="RefSeq" id="WP_000801367.1">
    <property type="nucleotide sequence ID" value="NC_011741.1"/>
</dbReference>
<dbReference type="SMR" id="B7M6U5"/>
<dbReference type="GeneID" id="93774695"/>
<dbReference type="KEGG" id="ecr:ECIAI1_2493"/>
<dbReference type="HOGENOM" id="CLU_026169_0_1_6"/>
<dbReference type="UniPathway" id="UPA00251">
    <property type="reaction ID" value="UER00322"/>
</dbReference>
<dbReference type="GO" id="GO:0005737">
    <property type="term" value="C:cytoplasm"/>
    <property type="evidence" value="ECO:0007669"/>
    <property type="project" value="UniProtKB-SubCell"/>
</dbReference>
<dbReference type="GO" id="GO:0004109">
    <property type="term" value="F:coproporphyrinogen oxidase activity"/>
    <property type="evidence" value="ECO:0007669"/>
    <property type="project" value="UniProtKB-UniRule"/>
</dbReference>
<dbReference type="GO" id="GO:0030145">
    <property type="term" value="F:manganese ion binding"/>
    <property type="evidence" value="ECO:0007669"/>
    <property type="project" value="UniProtKB-UniRule"/>
</dbReference>
<dbReference type="GO" id="GO:0042803">
    <property type="term" value="F:protein homodimerization activity"/>
    <property type="evidence" value="ECO:0000250"/>
    <property type="project" value="UniProtKB"/>
</dbReference>
<dbReference type="GO" id="GO:0006782">
    <property type="term" value="P:protoporphyrinogen IX biosynthetic process"/>
    <property type="evidence" value="ECO:0007669"/>
    <property type="project" value="UniProtKB-UniRule"/>
</dbReference>
<dbReference type="FunFam" id="3.40.1500.10:FF:000001">
    <property type="entry name" value="Oxygen-dependent coproporphyrinogen-III oxidase"/>
    <property type="match status" value="1"/>
</dbReference>
<dbReference type="Gene3D" id="3.40.1500.10">
    <property type="entry name" value="Coproporphyrinogen III oxidase, aerobic"/>
    <property type="match status" value="1"/>
</dbReference>
<dbReference type="HAMAP" id="MF_00333">
    <property type="entry name" value="Coprogen_oxidas"/>
    <property type="match status" value="1"/>
</dbReference>
<dbReference type="InterPro" id="IPR001260">
    <property type="entry name" value="Coprogen_oxidase_aer"/>
</dbReference>
<dbReference type="InterPro" id="IPR036406">
    <property type="entry name" value="Coprogen_oxidase_aer_sf"/>
</dbReference>
<dbReference type="InterPro" id="IPR018375">
    <property type="entry name" value="Coprogen_oxidase_CS"/>
</dbReference>
<dbReference type="NCBIfam" id="NF003727">
    <property type="entry name" value="PRK05330.1"/>
    <property type="match status" value="1"/>
</dbReference>
<dbReference type="PANTHER" id="PTHR10755">
    <property type="entry name" value="COPROPORPHYRINOGEN III OXIDASE, MITOCHONDRIAL"/>
    <property type="match status" value="1"/>
</dbReference>
<dbReference type="PANTHER" id="PTHR10755:SF0">
    <property type="entry name" value="OXYGEN-DEPENDENT COPROPORPHYRINOGEN-III OXIDASE, MITOCHONDRIAL"/>
    <property type="match status" value="1"/>
</dbReference>
<dbReference type="Pfam" id="PF01218">
    <property type="entry name" value="Coprogen_oxidas"/>
    <property type="match status" value="1"/>
</dbReference>
<dbReference type="PIRSF" id="PIRSF000166">
    <property type="entry name" value="Coproporphyri_ox"/>
    <property type="match status" value="1"/>
</dbReference>
<dbReference type="PRINTS" id="PR00073">
    <property type="entry name" value="COPRGNOXDASE"/>
</dbReference>
<dbReference type="SUPFAM" id="SSF102886">
    <property type="entry name" value="Coproporphyrinogen III oxidase"/>
    <property type="match status" value="1"/>
</dbReference>
<dbReference type="PROSITE" id="PS01021">
    <property type="entry name" value="COPROGEN_OXIDASE"/>
    <property type="match status" value="1"/>
</dbReference>
<comment type="function">
    <text evidence="1">Involved in the heme biosynthesis. Catalyzes the aerobic oxidative decarboxylation of propionate groups of rings A and B of coproporphyrinogen-III to yield the vinyl groups in protoporphyrinogen-IX.</text>
</comment>
<comment type="catalytic activity">
    <reaction evidence="1">
        <text>coproporphyrinogen III + O2 + 2 H(+) = protoporphyrinogen IX + 2 CO2 + 2 H2O</text>
        <dbReference type="Rhea" id="RHEA:18257"/>
        <dbReference type="ChEBI" id="CHEBI:15377"/>
        <dbReference type="ChEBI" id="CHEBI:15378"/>
        <dbReference type="ChEBI" id="CHEBI:15379"/>
        <dbReference type="ChEBI" id="CHEBI:16526"/>
        <dbReference type="ChEBI" id="CHEBI:57307"/>
        <dbReference type="ChEBI" id="CHEBI:57309"/>
        <dbReference type="EC" id="1.3.3.3"/>
    </reaction>
</comment>
<comment type="cofactor">
    <cofactor evidence="1">
        <name>Mn(2+)</name>
        <dbReference type="ChEBI" id="CHEBI:29035"/>
    </cofactor>
</comment>
<comment type="pathway">
    <text evidence="1">Porphyrin-containing compound metabolism; protoporphyrin-IX biosynthesis; protoporphyrinogen-IX from coproporphyrinogen-III (O2 route): step 1/1.</text>
</comment>
<comment type="subunit">
    <text evidence="1">Homodimer.</text>
</comment>
<comment type="subcellular location">
    <subcellularLocation>
        <location evidence="1">Cytoplasm</location>
    </subcellularLocation>
</comment>
<comment type="similarity">
    <text evidence="1">Belongs to the aerobic coproporphyrinogen-III oxidase family.</text>
</comment>
<accession>B7M6U5</accession>
<gene>
    <name evidence="1" type="primary">hemF</name>
    <name type="ordered locus">ECIAI1_2493</name>
</gene>
<feature type="chain" id="PRO_1000119798" description="Oxygen-dependent coproporphyrinogen-III oxidase">
    <location>
        <begin position="1"/>
        <end position="299"/>
    </location>
</feature>
<feature type="region of interest" description="Important for dimerization" evidence="1">
    <location>
        <begin position="240"/>
        <end position="275"/>
    </location>
</feature>
<feature type="active site" description="Proton donor" evidence="1">
    <location>
        <position position="106"/>
    </location>
</feature>
<feature type="binding site" evidence="1">
    <location>
        <position position="92"/>
    </location>
    <ligand>
        <name>substrate</name>
    </ligand>
</feature>
<feature type="binding site" evidence="1">
    <location>
        <position position="96"/>
    </location>
    <ligand>
        <name>Mn(2+)</name>
        <dbReference type="ChEBI" id="CHEBI:29035"/>
    </ligand>
</feature>
<feature type="binding site" evidence="1">
    <location>
        <position position="106"/>
    </location>
    <ligand>
        <name>Mn(2+)</name>
        <dbReference type="ChEBI" id="CHEBI:29035"/>
    </ligand>
</feature>
<feature type="binding site" evidence="1">
    <location>
        <begin position="108"/>
        <end position="110"/>
    </location>
    <ligand>
        <name>substrate</name>
    </ligand>
</feature>
<feature type="binding site" evidence="1">
    <location>
        <position position="145"/>
    </location>
    <ligand>
        <name>Mn(2+)</name>
        <dbReference type="ChEBI" id="CHEBI:29035"/>
    </ligand>
</feature>
<feature type="binding site" evidence="1">
    <location>
        <position position="175"/>
    </location>
    <ligand>
        <name>Mn(2+)</name>
        <dbReference type="ChEBI" id="CHEBI:29035"/>
    </ligand>
</feature>
<feature type="binding site" evidence="1">
    <location>
        <begin position="258"/>
        <end position="260"/>
    </location>
    <ligand>
        <name>substrate</name>
    </ligand>
</feature>
<feature type="site" description="Important for dimerization" evidence="1">
    <location>
        <position position="175"/>
    </location>
</feature>
<keyword id="KW-0963">Cytoplasm</keyword>
<keyword id="KW-0350">Heme biosynthesis</keyword>
<keyword id="KW-0464">Manganese</keyword>
<keyword id="KW-0479">Metal-binding</keyword>
<keyword id="KW-0560">Oxidoreductase</keyword>
<keyword id="KW-0627">Porphyrin biosynthesis</keyword>
<reference key="1">
    <citation type="journal article" date="2009" name="PLoS Genet.">
        <title>Organised genome dynamics in the Escherichia coli species results in highly diverse adaptive paths.</title>
        <authorList>
            <person name="Touchon M."/>
            <person name="Hoede C."/>
            <person name="Tenaillon O."/>
            <person name="Barbe V."/>
            <person name="Baeriswyl S."/>
            <person name="Bidet P."/>
            <person name="Bingen E."/>
            <person name="Bonacorsi S."/>
            <person name="Bouchier C."/>
            <person name="Bouvet O."/>
            <person name="Calteau A."/>
            <person name="Chiapello H."/>
            <person name="Clermont O."/>
            <person name="Cruveiller S."/>
            <person name="Danchin A."/>
            <person name="Diard M."/>
            <person name="Dossat C."/>
            <person name="Karoui M.E."/>
            <person name="Frapy E."/>
            <person name="Garry L."/>
            <person name="Ghigo J.M."/>
            <person name="Gilles A.M."/>
            <person name="Johnson J."/>
            <person name="Le Bouguenec C."/>
            <person name="Lescat M."/>
            <person name="Mangenot S."/>
            <person name="Martinez-Jehanne V."/>
            <person name="Matic I."/>
            <person name="Nassif X."/>
            <person name="Oztas S."/>
            <person name="Petit M.A."/>
            <person name="Pichon C."/>
            <person name="Rouy Z."/>
            <person name="Ruf C.S."/>
            <person name="Schneider D."/>
            <person name="Tourret J."/>
            <person name="Vacherie B."/>
            <person name="Vallenet D."/>
            <person name="Medigue C."/>
            <person name="Rocha E.P.C."/>
            <person name="Denamur E."/>
        </authorList>
    </citation>
    <scope>NUCLEOTIDE SEQUENCE [LARGE SCALE GENOMIC DNA]</scope>
    <source>
        <strain>IAI1</strain>
    </source>
</reference>
<name>HEM6_ECO8A</name>
<organism>
    <name type="scientific">Escherichia coli O8 (strain IAI1)</name>
    <dbReference type="NCBI Taxonomy" id="585034"/>
    <lineage>
        <taxon>Bacteria</taxon>
        <taxon>Pseudomonadati</taxon>
        <taxon>Pseudomonadota</taxon>
        <taxon>Gammaproteobacteria</taxon>
        <taxon>Enterobacterales</taxon>
        <taxon>Enterobacteriaceae</taxon>
        <taxon>Escherichia</taxon>
    </lineage>
</organism>
<proteinExistence type="inferred from homology"/>